<accession>A8A234</accession>
<proteinExistence type="inferred from homology"/>
<organism>
    <name type="scientific">Escherichia coli O9:H4 (strain HS)</name>
    <dbReference type="NCBI Taxonomy" id="331112"/>
    <lineage>
        <taxon>Bacteria</taxon>
        <taxon>Pseudomonadati</taxon>
        <taxon>Pseudomonadota</taxon>
        <taxon>Gammaproteobacteria</taxon>
        <taxon>Enterobacterales</taxon>
        <taxon>Enterobacteriaceae</taxon>
        <taxon>Escherichia</taxon>
    </lineage>
</organism>
<feature type="chain" id="PRO_0000384916" description="Elongation factor P-like protein">
    <location>
        <begin position="1"/>
        <end position="190"/>
    </location>
</feature>
<comment type="similarity">
    <text evidence="1">Belongs to the elongation factor P family.</text>
</comment>
<comment type="sequence caution" evidence="2">
    <conflict type="erroneous initiation">
        <sequence resource="EMBL-CDS" id="ABV06588"/>
    </conflict>
</comment>
<reference key="1">
    <citation type="journal article" date="2008" name="J. Bacteriol.">
        <title>The pangenome structure of Escherichia coli: comparative genomic analysis of E. coli commensal and pathogenic isolates.</title>
        <authorList>
            <person name="Rasko D.A."/>
            <person name="Rosovitz M.J."/>
            <person name="Myers G.S.A."/>
            <person name="Mongodin E.F."/>
            <person name="Fricke W.F."/>
            <person name="Gajer P."/>
            <person name="Crabtree J."/>
            <person name="Sebaihia M."/>
            <person name="Thomson N.R."/>
            <person name="Chaudhuri R."/>
            <person name="Henderson I.R."/>
            <person name="Sperandio V."/>
            <person name="Ravel J."/>
        </authorList>
    </citation>
    <scope>NUCLEOTIDE SEQUENCE [LARGE SCALE GENOMIC DNA]</scope>
    <source>
        <strain>HS</strain>
    </source>
</reference>
<sequence>MPRANEIKKGMVLNYNGKLLLVKDIDIQSPTARGAATLYKMRFSDVRTGLKVEERFKGDDIVDTVTLTRRYVDFSYVDGNEYVFMDKEDYTPYTFTKDQIEEELLFMPEGGMPDMQVLTWDGQLLALELPQTVDLEIVETAPGIKGASASARNKPATLSTGLVIQVPEYLSPGEKIRIHIEERRYMGRAD</sequence>
<evidence type="ECO:0000255" key="1">
    <source>
        <dbReference type="HAMAP-Rule" id="MF_00646"/>
    </source>
</evidence>
<evidence type="ECO:0000305" key="2"/>
<gene>
    <name evidence="1" type="primary">yeiP</name>
    <name type="ordered locus">EcHS_A2309</name>
</gene>
<protein>
    <recommendedName>
        <fullName evidence="1">Elongation factor P-like protein</fullName>
    </recommendedName>
</protein>
<name>EFPL_ECOHS</name>
<dbReference type="EMBL" id="CP000802">
    <property type="protein sequence ID" value="ABV06588.1"/>
    <property type="status" value="ALT_INIT"/>
    <property type="molecule type" value="Genomic_DNA"/>
</dbReference>
<dbReference type="RefSeq" id="WP_001136827.1">
    <property type="nucleotide sequence ID" value="NC_009800.1"/>
</dbReference>
<dbReference type="SMR" id="A8A234"/>
<dbReference type="GeneID" id="93775010"/>
<dbReference type="KEGG" id="ecx:EcHS_A2309"/>
<dbReference type="HOGENOM" id="CLU_074944_2_0_6"/>
<dbReference type="GO" id="GO:0005829">
    <property type="term" value="C:cytosol"/>
    <property type="evidence" value="ECO:0007669"/>
    <property type="project" value="UniProtKB-ARBA"/>
</dbReference>
<dbReference type="GO" id="GO:0003746">
    <property type="term" value="F:translation elongation factor activity"/>
    <property type="evidence" value="ECO:0007669"/>
    <property type="project" value="UniProtKB-UniRule"/>
</dbReference>
<dbReference type="GO" id="GO:0043043">
    <property type="term" value="P:peptide biosynthetic process"/>
    <property type="evidence" value="ECO:0007669"/>
    <property type="project" value="InterPro"/>
</dbReference>
<dbReference type="CDD" id="cd04470">
    <property type="entry name" value="S1_EF-P_repeat_1"/>
    <property type="match status" value="1"/>
</dbReference>
<dbReference type="CDD" id="cd05794">
    <property type="entry name" value="S1_EF-P_repeat_2"/>
    <property type="match status" value="1"/>
</dbReference>
<dbReference type="FunFam" id="2.40.50.140:FF:000004">
    <property type="entry name" value="Elongation factor P"/>
    <property type="match status" value="1"/>
</dbReference>
<dbReference type="FunFam" id="2.30.30.30:FF:000011">
    <property type="entry name" value="Elongation factor P-like protein"/>
    <property type="match status" value="1"/>
</dbReference>
<dbReference type="FunFam" id="2.40.50.140:FF:000053">
    <property type="entry name" value="Elongation factor P-like protein"/>
    <property type="match status" value="1"/>
</dbReference>
<dbReference type="Gene3D" id="2.30.30.30">
    <property type="match status" value="1"/>
</dbReference>
<dbReference type="Gene3D" id="2.40.50.140">
    <property type="entry name" value="Nucleic acid-binding proteins"/>
    <property type="match status" value="2"/>
</dbReference>
<dbReference type="HAMAP" id="MF_00646">
    <property type="entry name" value="EFP"/>
    <property type="match status" value="1"/>
</dbReference>
<dbReference type="InterPro" id="IPR015365">
    <property type="entry name" value="Elong-fact-P_C"/>
</dbReference>
<dbReference type="InterPro" id="IPR012340">
    <property type="entry name" value="NA-bd_OB-fold"/>
</dbReference>
<dbReference type="InterPro" id="IPR014722">
    <property type="entry name" value="Rib_uL2_dom2"/>
</dbReference>
<dbReference type="InterPro" id="IPR020599">
    <property type="entry name" value="Transl_elong_fac_P/YeiP"/>
</dbReference>
<dbReference type="InterPro" id="IPR013185">
    <property type="entry name" value="Transl_elong_KOW-like"/>
</dbReference>
<dbReference type="InterPro" id="IPR011897">
    <property type="entry name" value="Transl_elong_p-like_YeiP"/>
</dbReference>
<dbReference type="InterPro" id="IPR001059">
    <property type="entry name" value="Transl_elong_P/YeiP_cen"/>
</dbReference>
<dbReference type="InterPro" id="IPR013852">
    <property type="entry name" value="Transl_elong_P/YeiP_CS"/>
</dbReference>
<dbReference type="InterPro" id="IPR008991">
    <property type="entry name" value="Translation_prot_SH3-like_sf"/>
</dbReference>
<dbReference type="NCBIfam" id="NF001810">
    <property type="entry name" value="PRK00529.1"/>
    <property type="match status" value="1"/>
</dbReference>
<dbReference type="NCBIfam" id="NF003392">
    <property type="entry name" value="PRK04542.1"/>
    <property type="match status" value="1"/>
</dbReference>
<dbReference type="NCBIfam" id="TIGR02178">
    <property type="entry name" value="yeiP"/>
    <property type="match status" value="1"/>
</dbReference>
<dbReference type="PANTHER" id="PTHR30053">
    <property type="entry name" value="ELONGATION FACTOR P"/>
    <property type="match status" value="1"/>
</dbReference>
<dbReference type="PANTHER" id="PTHR30053:SF14">
    <property type="entry name" value="TRANSLATION ELONGATION FACTOR KOW-LIKE DOMAIN-CONTAINING PROTEIN"/>
    <property type="match status" value="1"/>
</dbReference>
<dbReference type="Pfam" id="PF01132">
    <property type="entry name" value="EFP"/>
    <property type="match status" value="1"/>
</dbReference>
<dbReference type="Pfam" id="PF08207">
    <property type="entry name" value="EFP_N"/>
    <property type="match status" value="1"/>
</dbReference>
<dbReference type="Pfam" id="PF09285">
    <property type="entry name" value="Elong-fact-P_C"/>
    <property type="match status" value="1"/>
</dbReference>
<dbReference type="PIRSF" id="PIRSF005901">
    <property type="entry name" value="EF-P"/>
    <property type="match status" value="1"/>
</dbReference>
<dbReference type="SMART" id="SM01185">
    <property type="entry name" value="EFP"/>
    <property type="match status" value="1"/>
</dbReference>
<dbReference type="SMART" id="SM00841">
    <property type="entry name" value="Elong-fact-P_C"/>
    <property type="match status" value="1"/>
</dbReference>
<dbReference type="SUPFAM" id="SSF50249">
    <property type="entry name" value="Nucleic acid-binding proteins"/>
    <property type="match status" value="2"/>
</dbReference>
<dbReference type="SUPFAM" id="SSF50104">
    <property type="entry name" value="Translation proteins SH3-like domain"/>
    <property type="match status" value="1"/>
</dbReference>
<dbReference type="PROSITE" id="PS01275">
    <property type="entry name" value="EFP"/>
    <property type="match status" value="1"/>
</dbReference>